<feature type="chain" id="PRO_1000085402" description="N-succinylglutamate 5-semialdehyde dehydrogenase">
    <location>
        <begin position="1"/>
        <end position="492"/>
    </location>
</feature>
<feature type="active site" evidence="1">
    <location>
        <position position="243"/>
    </location>
</feature>
<feature type="active site" evidence="1">
    <location>
        <position position="277"/>
    </location>
</feature>
<feature type="binding site" evidence="1">
    <location>
        <begin position="220"/>
        <end position="225"/>
    </location>
    <ligand>
        <name>NAD(+)</name>
        <dbReference type="ChEBI" id="CHEBI:57540"/>
    </ligand>
</feature>
<organism>
    <name type="scientific">Escherichia coli (strain ATCC 8739 / DSM 1576 / NBRC 3972 / NCIMB 8545 / WDCM 00012 / Crooks)</name>
    <dbReference type="NCBI Taxonomy" id="481805"/>
    <lineage>
        <taxon>Bacteria</taxon>
        <taxon>Pseudomonadati</taxon>
        <taxon>Pseudomonadota</taxon>
        <taxon>Gammaproteobacteria</taxon>
        <taxon>Enterobacterales</taxon>
        <taxon>Enterobacteriaceae</taxon>
        <taxon>Escherichia</taxon>
    </lineage>
</organism>
<name>ASTD_ECOLC</name>
<reference key="1">
    <citation type="submission" date="2008-02" db="EMBL/GenBank/DDBJ databases">
        <title>Complete sequence of Escherichia coli C str. ATCC 8739.</title>
        <authorList>
            <person name="Copeland A."/>
            <person name="Lucas S."/>
            <person name="Lapidus A."/>
            <person name="Glavina del Rio T."/>
            <person name="Dalin E."/>
            <person name="Tice H."/>
            <person name="Bruce D."/>
            <person name="Goodwin L."/>
            <person name="Pitluck S."/>
            <person name="Kiss H."/>
            <person name="Brettin T."/>
            <person name="Detter J.C."/>
            <person name="Han C."/>
            <person name="Kuske C.R."/>
            <person name="Schmutz J."/>
            <person name="Larimer F."/>
            <person name="Land M."/>
            <person name="Hauser L."/>
            <person name="Kyrpides N."/>
            <person name="Mikhailova N."/>
            <person name="Ingram L."/>
            <person name="Richardson P."/>
        </authorList>
    </citation>
    <scope>NUCLEOTIDE SEQUENCE [LARGE SCALE GENOMIC DNA]</scope>
    <source>
        <strain>ATCC 8739 / DSM 1576 / NBRC 3972 / NCIMB 8545 / WDCM 00012 / Crooks</strain>
    </source>
</reference>
<protein>
    <recommendedName>
        <fullName evidence="1">N-succinylglutamate 5-semialdehyde dehydrogenase</fullName>
        <ecNumber evidence="1">1.2.1.71</ecNumber>
    </recommendedName>
    <alternativeName>
        <fullName evidence="1">Succinylglutamic semialdehyde dehydrogenase</fullName>
        <shortName evidence="1">SGSD</shortName>
    </alternativeName>
</protein>
<evidence type="ECO:0000255" key="1">
    <source>
        <dbReference type="HAMAP-Rule" id="MF_01174"/>
    </source>
</evidence>
<comment type="function">
    <text evidence="1">Catalyzes the NAD-dependent reduction of succinylglutamate semialdehyde into succinylglutamate.</text>
</comment>
<comment type="catalytic activity">
    <reaction evidence="1">
        <text>N-succinyl-L-glutamate 5-semialdehyde + NAD(+) + H2O = N-succinyl-L-glutamate + NADH + 2 H(+)</text>
        <dbReference type="Rhea" id="RHEA:10812"/>
        <dbReference type="ChEBI" id="CHEBI:15377"/>
        <dbReference type="ChEBI" id="CHEBI:15378"/>
        <dbReference type="ChEBI" id="CHEBI:57540"/>
        <dbReference type="ChEBI" id="CHEBI:57945"/>
        <dbReference type="ChEBI" id="CHEBI:58520"/>
        <dbReference type="ChEBI" id="CHEBI:58763"/>
        <dbReference type="EC" id="1.2.1.71"/>
    </reaction>
</comment>
<comment type="pathway">
    <text evidence="1">Amino-acid degradation; L-arginine degradation via AST pathway; L-glutamate and succinate from L-arginine: step 4/5.</text>
</comment>
<comment type="similarity">
    <text evidence="1">Belongs to the aldehyde dehydrogenase family. AstD subfamily.</text>
</comment>
<accession>B1IPI4</accession>
<keyword id="KW-0056">Arginine metabolism</keyword>
<keyword id="KW-0520">NAD</keyword>
<keyword id="KW-0560">Oxidoreductase</keyword>
<dbReference type="EC" id="1.2.1.71" evidence="1"/>
<dbReference type="EMBL" id="CP000946">
    <property type="protein sequence ID" value="ACA77534.1"/>
    <property type="molecule type" value="Genomic_DNA"/>
</dbReference>
<dbReference type="RefSeq" id="WP_000177200.1">
    <property type="nucleotide sequence ID" value="NZ_MTFT01000006.1"/>
</dbReference>
<dbReference type="SMR" id="B1IPI4"/>
<dbReference type="KEGG" id="ecl:EcolC_1886"/>
<dbReference type="HOGENOM" id="CLU_005391_1_0_6"/>
<dbReference type="UniPathway" id="UPA00185">
    <property type="reaction ID" value="UER00282"/>
</dbReference>
<dbReference type="GO" id="GO:0004030">
    <property type="term" value="F:aldehyde dehydrogenase [NAD(P)+] activity"/>
    <property type="evidence" value="ECO:0007669"/>
    <property type="project" value="UniProtKB-ARBA"/>
</dbReference>
<dbReference type="GO" id="GO:0043824">
    <property type="term" value="F:succinylglutamate-semialdehyde dehydrogenase activity"/>
    <property type="evidence" value="ECO:0007669"/>
    <property type="project" value="UniProtKB-EC"/>
</dbReference>
<dbReference type="GO" id="GO:0019544">
    <property type="term" value="P:arginine catabolic process to glutamate"/>
    <property type="evidence" value="ECO:0007669"/>
    <property type="project" value="UniProtKB-UniRule"/>
</dbReference>
<dbReference type="GO" id="GO:0019545">
    <property type="term" value="P:arginine catabolic process to succinate"/>
    <property type="evidence" value="ECO:0007669"/>
    <property type="project" value="UniProtKB-UniRule"/>
</dbReference>
<dbReference type="CDD" id="cd07095">
    <property type="entry name" value="ALDH_SGSD_AstD"/>
    <property type="match status" value="1"/>
</dbReference>
<dbReference type="FunFam" id="3.40.309.10:FF:000013">
    <property type="entry name" value="N-succinylglutamate 5-semialdehyde dehydrogenase"/>
    <property type="match status" value="1"/>
</dbReference>
<dbReference type="FunFam" id="3.40.605.10:FF:000010">
    <property type="entry name" value="N-succinylglutamate 5-semialdehyde dehydrogenase"/>
    <property type="match status" value="1"/>
</dbReference>
<dbReference type="Gene3D" id="3.40.605.10">
    <property type="entry name" value="Aldehyde Dehydrogenase, Chain A, domain 1"/>
    <property type="match status" value="1"/>
</dbReference>
<dbReference type="Gene3D" id="3.40.309.10">
    <property type="entry name" value="Aldehyde Dehydrogenase, Chain A, domain 2"/>
    <property type="match status" value="1"/>
</dbReference>
<dbReference type="HAMAP" id="MF_01174">
    <property type="entry name" value="Aldedh_AstD"/>
    <property type="match status" value="1"/>
</dbReference>
<dbReference type="InterPro" id="IPR016161">
    <property type="entry name" value="Ald_DH/histidinol_DH"/>
</dbReference>
<dbReference type="InterPro" id="IPR016163">
    <property type="entry name" value="Ald_DH_C"/>
</dbReference>
<dbReference type="InterPro" id="IPR016160">
    <property type="entry name" value="Ald_DH_CS_CYS"/>
</dbReference>
<dbReference type="InterPro" id="IPR029510">
    <property type="entry name" value="Ald_DH_CS_GLU"/>
</dbReference>
<dbReference type="InterPro" id="IPR016162">
    <property type="entry name" value="Ald_DH_N"/>
</dbReference>
<dbReference type="InterPro" id="IPR015590">
    <property type="entry name" value="Aldehyde_DH_dom"/>
</dbReference>
<dbReference type="InterPro" id="IPR017649">
    <property type="entry name" value="SuccinylGlu_semiald_DH_AstD"/>
</dbReference>
<dbReference type="NCBIfam" id="TIGR03240">
    <property type="entry name" value="arg_catab_astD"/>
    <property type="match status" value="1"/>
</dbReference>
<dbReference type="NCBIfam" id="NF006992">
    <property type="entry name" value="PRK09457.1"/>
    <property type="match status" value="1"/>
</dbReference>
<dbReference type="PANTHER" id="PTHR11699">
    <property type="entry name" value="ALDEHYDE DEHYDROGENASE-RELATED"/>
    <property type="match status" value="1"/>
</dbReference>
<dbReference type="Pfam" id="PF00171">
    <property type="entry name" value="Aldedh"/>
    <property type="match status" value="1"/>
</dbReference>
<dbReference type="SUPFAM" id="SSF53720">
    <property type="entry name" value="ALDH-like"/>
    <property type="match status" value="1"/>
</dbReference>
<dbReference type="PROSITE" id="PS00070">
    <property type="entry name" value="ALDEHYDE_DEHYDR_CYS"/>
    <property type="match status" value="1"/>
</dbReference>
<dbReference type="PROSITE" id="PS00687">
    <property type="entry name" value="ALDEHYDE_DEHYDR_GLU"/>
    <property type="match status" value="1"/>
</dbReference>
<gene>
    <name evidence="1" type="primary">astD</name>
    <name type="ordered locus">EcolC_1886</name>
</gene>
<proteinExistence type="inferred from homology"/>
<sequence>MTLWINGDWITGQGALRVRRNPVSGEVLWQGNDADAAQVEQACRAARAAFPRWARLSFAERQAVVERFAGLLERNKGELTAIIARETGKPRWEAATEVTAMINKIAISIKAYHVRTGEQRSEMPDGAASLRHRPHGVLAVFGPYNFPGHLPNGHIVPALLAGNTIIFKPSELTPWSGEAVMRLWQQAGLPPGVLNLVQGGRETGQALSALEDLDGLLFTGSANTGYQLRRQLSGQPEKILALEMGGNNPLIIDEVADIDAAVHLTIQSAFVTAGQRCTCARRLLLKSGAQGDAFLARLVAVSQRLTPGNWDDEPQPFIGGLISEQAAQQVVTAWQQLEAMGGRTLLAPRLLQSETSLLTPGIIEMTGVAGVPDEEVFGPLLRVWRYDSFEEAILMANNTRFGLSCGLVSPEREKFDQLLLEARAGIVNWNKPLTGAASTAPFGGIGASGNHRPSAWYAADYCAWPMASLESDSLTLPATLNPGLDFSDEVVR</sequence>